<keyword id="KW-1185">Reference proteome</keyword>
<keyword id="KW-0687">Ribonucleoprotein</keyword>
<keyword id="KW-0689">Ribosomal protein</keyword>
<keyword id="KW-0694">RNA-binding</keyword>
<keyword id="KW-0699">rRNA-binding</keyword>
<keyword id="KW-0820">tRNA-binding</keyword>
<proteinExistence type="inferred from homology"/>
<reference key="1">
    <citation type="journal article" date="2003" name="Proc. Natl. Acad. Sci. U.S.A.">
        <title>Complete genome sequence and analysis of Wolinella succinogenes.</title>
        <authorList>
            <person name="Baar C."/>
            <person name="Eppinger M."/>
            <person name="Raddatz G."/>
            <person name="Simon J."/>
            <person name="Lanz C."/>
            <person name="Klimmek O."/>
            <person name="Nandakumar R."/>
            <person name="Gross R."/>
            <person name="Rosinus A."/>
            <person name="Keller H."/>
            <person name="Jagtap P."/>
            <person name="Linke B."/>
            <person name="Meyer F."/>
            <person name="Lederer H."/>
            <person name="Schuster S.C."/>
        </authorList>
    </citation>
    <scope>NUCLEOTIDE SEQUENCE [LARGE SCALE GENOMIC DNA]</scope>
    <source>
        <strain>ATCC 29543 / DSM 1740 / CCUG 13145 / JCM 31913 / LMG 7466 / NCTC 11488 / FDC 602W</strain>
    </source>
</reference>
<comment type="function">
    <text evidence="1">Binds 23S rRNA and is also seen to make contacts with the A and possibly P site tRNAs.</text>
</comment>
<comment type="subunit">
    <text evidence="1">Part of the 50S ribosomal subunit.</text>
</comment>
<comment type="similarity">
    <text evidence="1">Belongs to the universal ribosomal protein uL16 family.</text>
</comment>
<evidence type="ECO:0000255" key="1">
    <source>
        <dbReference type="HAMAP-Rule" id="MF_01342"/>
    </source>
</evidence>
<evidence type="ECO:0000256" key="2">
    <source>
        <dbReference type="SAM" id="MobiDB-lite"/>
    </source>
</evidence>
<evidence type="ECO:0000305" key="3"/>
<organism>
    <name type="scientific">Wolinella succinogenes (strain ATCC 29543 / DSM 1740 / CCUG 13145 / JCM 31913 / LMG 7466 / NCTC 11488 / FDC 602W)</name>
    <name type="common">Vibrio succinogenes</name>
    <dbReference type="NCBI Taxonomy" id="273121"/>
    <lineage>
        <taxon>Bacteria</taxon>
        <taxon>Pseudomonadati</taxon>
        <taxon>Campylobacterota</taxon>
        <taxon>Epsilonproteobacteria</taxon>
        <taxon>Campylobacterales</taxon>
        <taxon>Helicobacteraceae</taxon>
        <taxon>Wolinella</taxon>
    </lineage>
</organism>
<feature type="chain" id="PRO_0000062252" description="Large ribosomal subunit protein uL16">
    <location>
        <begin position="1"/>
        <end position="141"/>
    </location>
</feature>
<feature type="region of interest" description="Disordered" evidence="2">
    <location>
        <begin position="1"/>
        <end position="22"/>
    </location>
</feature>
<feature type="compositionally biased region" description="Basic residues" evidence="2">
    <location>
        <begin position="1"/>
        <end position="21"/>
    </location>
</feature>
<accession>Q7M8E1</accession>
<dbReference type="EMBL" id="BX571661">
    <property type="protein sequence ID" value="CAE10735.1"/>
    <property type="molecule type" value="Genomic_DNA"/>
</dbReference>
<dbReference type="RefSeq" id="WP_011139519.1">
    <property type="nucleotide sequence ID" value="NC_005090.1"/>
</dbReference>
<dbReference type="SMR" id="Q7M8E1"/>
<dbReference type="STRING" id="273121.WS1709"/>
<dbReference type="KEGG" id="wsu:WS1709"/>
<dbReference type="eggNOG" id="COG0197">
    <property type="taxonomic scope" value="Bacteria"/>
</dbReference>
<dbReference type="HOGENOM" id="CLU_078858_2_1_7"/>
<dbReference type="Proteomes" id="UP000000422">
    <property type="component" value="Chromosome"/>
</dbReference>
<dbReference type="GO" id="GO:0022625">
    <property type="term" value="C:cytosolic large ribosomal subunit"/>
    <property type="evidence" value="ECO:0007669"/>
    <property type="project" value="TreeGrafter"/>
</dbReference>
<dbReference type="GO" id="GO:0019843">
    <property type="term" value="F:rRNA binding"/>
    <property type="evidence" value="ECO:0007669"/>
    <property type="project" value="UniProtKB-UniRule"/>
</dbReference>
<dbReference type="GO" id="GO:0003735">
    <property type="term" value="F:structural constituent of ribosome"/>
    <property type="evidence" value="ECO:0007669"/>
    <property type="project" value="InterPro"/>
</dbReference>
<dbReference type="GO" id="GO:0000049">
    <property type="term" value="F:tRNA binding"/>
    <property type="evidence" value="ECO:0007669"/>
    <property type="project" value="UniProtKB-KW"/>
</dbReference>
<dbReference type="GO" id="GO:0006412">
    <property type="term" value="P:translation"/>
    <property type="evidence" value="ECO:0007669"/>
    <property type="project" value="UniProtKB-UniRule"/>
</dbReference>
<dbReference type="CDD" id="cd01433">
    <property type="entry name" value="Ribosomal_L16_L10e"/>
    <property type="match status" value="1"/>
</dbReference>
<dbReference type="FunFam" id="3.90.1170.10:FF:000001">
    <property type="entry name" value="50S ribosomal protein L16"/>
    <property type="match status" value="1"/>
</dbReference>
<dbReference type="Gene3D" id="3.90.1170.10">
    <property type="entry name" value="Ribosomal protein L10e/L16"/>
    <property type="match status" value="1"/>
</dbReference>
<dbReference type="HAMAP" id="MF_01342">
    <property type="entry name" value="Ribosomal_uL16"/>
    <property type="match status" value="1"/>
</dbReference>
<dbReference type="InterPro" id="IPR047873">
    <property type="entry name" value="Ribosomal_uL16"/>
</dbReference>
<dbReference type="InterPro" id="IPR000114">
    <property type="entry name" value="Ribosomal_uL16_bact-type"/>
</dbReference>
<dbReference type="InterPro" id="IPR020798">
    <property type="entry name" value="Ribosomal_uL16_CS"/>
</dbReference>
<dbReference type="InterPro" id="IPR016180">
    <property type="entry name" value="Ribosomal_uL16_dom"/>
</dbReference>
<dbReference type="InterPro" id="IPR036920">
    <property type="entry name" value="Ribosomal_uL16_sf"/>
</dbReference>
<dbReference type="NCBIfam" id="TIGR01164">
    <property type="entry name" value="rplP_bact"/>
    <property type="match status" value="1"/>
</dbReference>
<dbReference type="PANTHER" id="PTHR12220">
    <property type="entry name" value="50S/60S RIBOSOMAL PROTEIN L16"/>
    <property type="match status" value="1"/>
</dbReference>
<dbReference type="PANTHER" id="PTHR12220:SF13">
    <property type="entry name" value="LARGE RIBOSOMAL SUBUNIT PROTEIN UL16M"/>
    <property type="match status" value="1"/>
</dbReference>
<dbReference type="Pfam" id="PF00252">
    <property type="entry name" value="Ribosomal_L16"/>
    <property type="match status" value="1"/>
</dbReference>
<dbReference type="PRINTS" id="PR00060">
    <property type="entry name" value="RIBOSOMALL16"/>
</dbReference>
<dbReference type="SUPFAM" id="SSF54686">
    <property type="entry name" value="Ribosomal protein L16p/L10e"/>
    <property type="match status" value="1"/>
</dbReference>
<dbReference type="PROSITE" id="PS00586">
    <property type="entry name" value="RIBOSOMAL_L16_1"/>
    <property type="match status" value="1"/>
</dbReference>
<dbReference type="PROSITE" id="PS00701">
    <property type="entry name" value="RIBOSOMAL_L16_2"/>
    <property type="match status" value="1"/>
</dbReference>
<protein>
    <recommendedName>
        <fullName evidence="1">Large ribosomal subunit protein uL16</fullName>
    </recommendedName>
    <alternativeName>
        <fullName evidence="3">50S ribosomal protein L16</fullName>
    </alternativeName>
</protein>
<sequence length="141" mass="16042">MLMPKRTKFRKQMKGRNRGKSFRGNSLAFGDIGIKATEHGRIDSRQIEAARIAMTRHIKRAGKIWIRVFPDKPLTAKPLETRMGKGKGSVDKWVMNIQPGRIVYEMAGIEEELAREALALAQSKLPFKTKIVTSESENEIY</sequence>
<name>RL16_WOLSU</name>
<gene>
    <name evidence="1" type="primary">rplP</name>
    <name type="ordered locus">WS1709</name>
</gene>